<keyword id="KW-1003">Cell membrane</keyword>
<keyword id="KW-0325">Glycoprotein</keyword>
<keyword id="KW-0336">GPI-anchor</keyword>
<keyword id="KW-0449">Lipoprotein</keyword>
<keyword id="KW-0472">Membrane</keyword>
<keyword id="KW-1185">Reference proteome</keyword>
<keyword id="KW-0732">Signal</keyword>
<feature type="signal peptide" evidence="1">
    <location>
        <begin position="1"/>
        <end position="20"/>
    </location>
</feature>
<feature type="chain" id="PRO_0000353831" description="Uncharacterized GPI-anchored protein SPAC750.07c">
    <location>
        <begin position="21"/>
        <end position="96"/>
    </location>
</feature>
<feature type="propeptide" id="PRO_0000353832" description="Removed in mature form" evidence="1">
    <location>
        <begin position="97"/>
        <end position="123"/>
    </location>
</feature>
<feature type="lipid moiety-binding region" description="GPI-anchor amidated glycine" evidence="1">
    <location>
        <position position="96"/>
    </location>
</feature>
<reference key="1">
    <citation type="journal article" date="2002" name="Nature">
        <title>The genome sequence of Schizosaccharomyces pombe.</title>
        <authorList>
            <person name="Wood V."/>
            <person name="Gwilliam R."/>
            <person name="Rajandream M.A."/>
            <person name="Lyne M.H."/>
            <person name="Lyne R."/>
            <person name="Stewart A."/>
            <person name="Sgouros J.G."/>
            <person name="Peat N."/>
            <person name="Hayles J."/>
            <person name="Baker S.G."/>
            <person name="Basham D."/>
            <person name="Bowman S."/>
            <person name="Brooks K."/>
            <person name="Brown D."/>
            <person name="Brown S."/>
            <person name="Chillingworth T."/>
            <person name="Churcher C.M."/>
            <person name="Collins M."/>
            <person name="Connor R."/>
            <person name="Cronin A."/>
            <person name="Davis P."/>
            <person name="Feltwell T."/>
            <person name="Fraser A."/>
            <person name="Gentles S."/>
            <person name="Goble A."/>
            <person name="Hamlin N."/>
            <person name="Harris D.E."/>
            <person name="Hidalgo J."/>
            <person name="Hodgson G."/>
            <person name="Holroyd S."/>
            <person name="Hornsby T."/>
            <person name="Howarth S."/>
            <person name="Huckle E.J."/>
            <person name="Hunt S."/>
            <person name="Jagels K."/>
            <person name="James K.D."/>
            <person name="Jones L."/>
            <person name="Jones M."/>
            <person name="Leather S."/>
            <person name="McDonald S."/>
            <person name="McLean J."/>
            <person name="Mooney P."/>
            <person name="Moule S."/>
            <person name="Mungall K.L."/>
            <person name="Murphy L.D."/>
            <person name="Niblett D."/>
            <person name="Odell C."/>
            <person name="Oliver K."/>
            <person name="O'Neil S."/>
            <person name="Pearson D."/>
            <person name="Quail M.A."/>
            <person name="Rabbinowitsch E."/>
            <person name="Rutherford K.M."/>
            <person name="Rutter S."/>
            <person name="Saunders D."/>
            <person name="Seeger K."/>
            <person name="Sharp S."/>
            <person name="Skelton J."/>
            <person name="Simmonds M.N."/>
            <person name="Squares R."/>
            <person name="Squares S."/>
            <person name="Stevens K."/>
            <person name="Taylor K."/>
            <person name="Taylor R.G."/>
            <person name="Tivey A."/>
            <person name="Walsh S.V."/>
            <person name="Warren T."/>
            <person name="Whitehead S."/>
            <person name="Woodward J.R."/>
            <person name="Volckaert G."/>
            <person name="Aert R."/>
            <person name="Robben J."/>
            <person name="Grymonprez B."/>
            <person name="Weltjens I."/>
            <person name="Vanstreels E."/>
            <person name="Rieger M."/>
            <person name="Schaefer M."/>
            <person name="Mueller-Auer S."/>
            <person name="Gabel C."/>
            <person name="Fuchs M."/>
            <person name="Duesterhoeft A."/>
            <person name="Fritzc C."/>
            <person name="Holzer E."/>
            <person name="Moestl D."/>
            <person name="Hilbert H."/>
            <person name="Borzym K."/>
            <person name="Langer I."/>
            <person name="Beck A."/>
            <person name="Lehrach H."/>
            <person name="Reinhardt R."/>
            <person name="Pohl T.M."/>
            <person name="Eger P."/>
            <person name="Zimmermann W."/>
            <person name="Wedler H."/>
            <person name="Wambutt R."/>
            <person name="Purnelle B."/>
            <person name="Goffeau A."/>
            <person name="Cadieu E."/>
            <person name="Dreano S."/>
            <person name="Gloux S."/>
            <person name="Lelaure V."/>
            <person name="Mottier S."/>
            <person name="Galibert F."/>
            <person name="Aves S.J."/>
            <person name="Xiang Z."/>
            <person name="Hunt C."/>
            <person name="Moore K."/>
            <person name="Hurst S.M."/>
            <person name="Lucas M."/>
            <person name="Rochet M."/>
            <person name="Gaillardin C."/>
            <person name="Tallada V.A."/>
            <person name="Garzon A."/>
            <person name="Thode G."/>
            <person name="Daga R.R."/>
            <person name="Cruzado L."/>
            <person name="Jimenez J."/>
            <person name="Sanchez M."/>
            <person name="del Rey F."/>
            <person name="Benito J."/>
            <person name="Dominguez A."/>
            <person name="Revuelta J.L."/>
            <person name="Moreno S."/>
            <person name="Armstrong J."/>
            <person name="Forsburg S.L."/>
            <person name="Cerutti L."/>
            <person name="Lowe T."/>
            <person name="McCombie W.R."/>
            <person name="Paulsen I."/>
            <person name="Potashkin J."/>
            <person name="Shpakovski G.V."/>
            <person name="Ussery D."/>
            <person name="Barrell B.G."/>
            <person name="Nurse P."/>
        </authorList>
    </citation>
    <scope>NUCLEOTIDE SEQUENCE [LARGE SCALE GENOMIC DNA]</scope>
    <source>
        <strain>972 / ATCC 24843</strain>
    </source>
</reference>
<accession>Q9P3E4</accession>
<proteinExistence type="inferred from homology"/>
<comment type="subcellular location">
    <subcellularLocation>
        <location evidence="2">Cell membrane</location>
        <topology evidence="2">Lipid-anchor</topology>
        <topology evidence="2">GPI-anchor</topology>
    </subcellularLocation>
</comment>
<sequence length="123" mass="13128">MSPLIVGTLIIILLSGLATAFYVTWQGRLICAGVGLILEQAYEGGQMFNTLMAHCFETYNGVEKSGTQCVADWLKVGLLAVTFGAGGPRLVNTLGGSSPTTKRVIYIVMILLVLITLAVNLKH</sequence>
<dbReference type="EMBL" id="CU329670">
    <property type="protein sequence ID" value="CAB98258.1"/>
    <property type="molecule type" value="Genomic_DNA"/>
</dbReference>
<dbReference type="RefSeq" id="NP_595033.1">
    <property type="nucleotide sequence ID" value="NM_001020463.1"/>
</dbReference>
<dbReference type="RefSeq" id="XP_004001757.1">
    <property type="nucleotide sequence ID" value="XM_004001708.1"/>
</dbReference>
<dbReference type="SMR" id="Q9P3E4"/>
<dbReference type="BioGRID" id="1028617">
    <property type="interactions" value="3"/>
</dbReference>
<dbReference type="BioGRID" id="279164">
    <property type="interactions" value="3"/>
</dbReference>
<dbReference type="STRING" id="284812.Q9P3E4"/>
<dbReference type="PaxDb" id="4896-SPAC212.12.1"/>
<dbReference type="EnsemblFungi" id="SPAC212.12.1">
    <property type="protein sequence ID" value="SPAC212.12.1:pep"/>
    <property type="gene ID" value="SPAC212.12"/>
</dbReference>
<dbReference type="EnsemblFungi" id="SPAC750.07c.1">
    <property type="protein sequence ID" value="SPAC750.07c.1:pep"/>
    <property type="gene ID" value="SPAC750.07c"/>
</dbReference>
<dbReference type="KEGG" id="spo:2542711"/>
<dbReference type="PomBase" id="SPAC750.07c"/>
<dbReference type="VEuPathDB" id="FungiDB:SPAC212.12"/>
<dbReference type="VEuPathDB" id="FungiDB:SPAC750.07c"/>
<dbReference type="HOGENOM" id="CLU_2016536_0_0_1"/>
<dbReference type="InParanoid" id="Q9P3E4"/>
<dbReference type="PRO" id="PR:Q9P3E4"/>
<dbReference type="Proteomes" id="UP000002485">
    <property type="component" value="Chromosome I"/>
</dbReference>
<dbReference type="GO" id="GO:0005886">
    <property type="term" value="C:plasma membrane"/>
    <property type="evidence" value="ECO:0007669"/>
    <property type="project" value="UniProtKB-SubCell"/>
</dbReference>
<dbReference type="GO" id="GO:0098552">
    <property type="term" value="C:side of membrane"/>
    <property type="evidence" value="ECO:0007669"/>
    <property type="project" value="UniProtKB-KW"/>
</dbReference>
<gene>
    <name type="ORF">SPAC750.07c</name>
</gene>
<organism>
    <name type="scientific">Schizosaccharomyces pombe (strain 972 / ATCC 24843)</name>
    <name type="common">Fission yeast</name>
    <dbReference type="NCBI Taxonomy" id="284812"/>
    <lineage>
        <taxon>Eukaryota</taxon>
        <taxon>Fungi</taxon>
        <taxon>Dikarya</taxon>
        <taxon>Ascomycota</taxon>
        <taxon>Taphrinomycotina</taxon>
        <taxon>Schizosaccharomycetes</taxon>
        <taxon>Schizosaccharomycetales</taxon>
        <taxon>Schizosaccharomycetaceae</taxon>
        <taxon>Schizosaccharomyces</taxon>
    </lineage>
</organism>
<protein>
    <recommendedName>
        <fullName>Uncharacterized GPI-anchored protein SPAC750.07c</fullName>
    </recommendedName>
</protein>
<name>YLZ7_SCHPO</name>
<evidence type="ECO:0000255" key="1"/>
<evidence type="ECO:0000305" key="2"/>